<comment type="function">
    <text evidence="1 2">Methyltransferase required for the conversion of 2-polyprenyl-6-methoxy-1,4-benzoquinol (DDMQH2) to 2-polyprenyl-3-methyl-6-methoxy-1,4-benzoquinol (DMQH2).</text>
</comment>
<comment type="catalytic activity">
    <reaction evidence="1">
        <text>a 2-methoxy-6-(all-trans-polyprenyl)benzene-1,4-diol + S-adenosyl-L-methionine = a 5-methoxy-2-methyl-3-(all-trans-polyprenyl)benzene-1,4-diol + S-adenosyl-L-homocysteine + H(+)</text>
        <dbReference type="Rhea" id="RHEA:28286"/>
        <dbReference type="Rhea" id="RHEA-COMP:10858"/>
        <dbReference type="Rhea" id="RHEA-COMP:10859"/>
        <dbReference type="ChEBI" id="CHEBI:15378"/>
        <dbReference type="ChEBI" id="CHEBI:57856"/>
        <dbReference type="ChEBI" id="CHEBI:59789"/>
        <dbReference type="ChEBI" id="CHEBI:84166"/>
        <dbReference type="ChEBI" id="CHEBI:84167"/>
        <dbReference type="EC" id="2.1.1.201"/>
    </reaction>
</comment>
<comment type="pathway">
    <text evidence="1">Cofactor biosynthesis; ubiquinone biosynthesis.</text>
</comment>
<comment type="subunit">
    <text evidence="1">Component of a multi-subunit COQ enzyme complex.</text>
</comment>
<comment type="subcellular location">
    <subcellularLocation>
        <location evidence="1">Mitochondrion inner membrane</location>
        <topology evidence="1">Peripheral membrane protein</topology>
        <orientation evidence="1">Matrix side</orientation>
    </subcellularLocation>
</comment>
<comment type="similarity">
    <text evidence="1">Belongs to the class I-like SAM-binding methyltransferase superfamily. MenG/UbiE family.</text>
</comment>
<proteinExistence type="inferred from homology"/>
<organism>
    <name type="scientific">Caenorhabditis elegans</name>
    <dbReference type="NCBI Taxonomy" id="6239"/>
    <lineage>
        <taxon>Eukaryota</taxon>
        <taxon>Metazoa</taxon>
        <taxon>Ecdysozoa</taxon>
        <taxon>Nematoda</taxon>
        <taxon>Chromadorea</taxon>
        <taxon>Rhabditida</taxon>
        <taxon>Rhabditina</taxon>
        <taxon>Rhabditomorpha</taxon>
        <taxon>Rhabditoidea</taxon>
        <taxon>Rhabditidae</taxon>
        <taxon>Peloderinae</taxon>
        <taxon>Caenorhabditis</taxon>
    </lineage>
</organism>
<gene>
    <name evidence="1" type="primary">coq-5</name>
    <name type="ORF">ZK652.9</name>
</gene>
<sequence>MKGATNLFKSMRKPTNVGNFRQFSVNQVNSDNKRSEPGKKTHFGFTDVDEAEKEQKVHHVFANVAKKYDLMNDAMSMGVHRLWKDYYVGGLQVPYNAKCLDMAGGTGDIAFRILRHSPTAKVTVSDINQPMLDVGKKRAEKERDIQPSRAEWVCANAEQMPFESNTYDLFTMSFGIRNCTHPEKVVREAFRVLKPGGQLAILEFSEVNSALKPIYDAYSFNVIPVLGEILASDRASYQYLVESIRKFPNQDEFARIIREEGFSNVRYENLTFGVCSIHKGMKPRK</sequence>
<protein>
    <recommendedName>
        <fullName evidence="1">2-methoxy-6-polyprenyl-1,4-benzoquinol methylase, mitochondrial</fullName>
        <ecNumber evidence="1">2.1.1.201</ecNumber>
    </recommendedName>
    <alternativeName>
        <fullName evidence="1">Ubiquinone biosynthesis methyltransferase COQ5</fullName>
    </alternativeName>
</protein>
<evidence type="ECO:0000255" key="1">
    <source>
        <dbReference type="HAMAP-Rule" id="MF_03191"/>
    </source>
</evidence>
<evidence type="ECO:0000269" key="2">
    <source>
    </source>
</evidence>
<accession>P34666</accession>
<keyword id="KW-0472">Membrane</keyword>
<keyword id="KW-0489">Methyltransferase</keyword>
<keyword id="KW-0496">Mitochondrion</keyword>
<keyword id="KW-0999">Mitochondrion inner membrane</keyword>
<keyword id="KW-1185">Reference proteome</keyword>
<keyword id="KW-0949">S-adenosyl-L-methionine</keyword>
<keyword id="KW-0808">Transferase</keyword>
<keyword id="KW-0809">Transit peptide</keyword>
<keyword id="KW-0831">Ubiquinone biosynthesis</keyword>
<reference key="1">
    <citation type="journal article" date="1994" name="Nature">
        <title>2.2 Mb of contiguous nucleotide sequence from chromosome III of C. elegans.</title>
        <authorList>
            <person name="Wilson R."/>
            <person name="Ainscough R."/>
            <person name="Anderson K."/>
            <person name="Baynes C."/>
            <person name="Berks M."/>
            <person name="Bonfield J."/>
            <person name="Burton J."/>
            <person name="Connell M."/>
            <person name="Copsey T."/>
            <person name="Cooper J."/>
            <person name="Coulson A."/>
            <person name="Craxton M."/>
            <person name="Dear S."/>
            <person name="Du Z."/>
            <person name="Durbin R."/>
            <person name="Favello A."/>
            <person name="Fraser A."/>
            <person name="Fulton L."/>
            <person name="Gardner A."/>
            <person name="Green P."/>
            <person name="Hawkins T."/>
            <person name="Hillier L."/>
            <person name="Jier M."/>
            <person name="Johnston L."/>
            <person name="Jones M."/>
            <person name="Kershaw J."/>
            <person name="Kirsten J."/>
            <person name="Laisster N."/>
            <person name="Latreille P."/>
            <person name="Lightning J."/>
            <person name="Lloyd C."/>
            <person name="Mortimore B."/>
            <person name="O'Callaghan M."/>
            <person name="Parsons J."/>
            <person name="Percy C."/>
            <person name="Rifken L."/>
            <person name="Roopra A."/>
            <person name="Saunders D."/>
            <person name="Shownkeen R."/>
            <person name="Sims M."/>
            <person name="Smaldon N."/>
            <person name="Smith A."/>
            <person name="Smith M."/>
            <person name="Sonnhammer E."/>
            <person name="Staden R."/>
            <person name="Sulston J."/>
            <person name="Thierry-Mieg J."/>
            <person name="Thomas K."/>
            <person name="Vaudin M."/>
            <person name="Vaughan K."/>
            <person name="Waterston R."/>
            <person name="Watson A."/>
            <person name="Weinstock L."/>
            <person name="Wilkinson-Sproat J."/>
            <person name="Wohldman P."/>
        </authorList>
    </citation>
    <scope>NUCLEOTIDE SEQUENCE [LARGE SCALE GENOMIC DNA]</scope>
    <source>
        <strain>Bristol N2</strain>
    </source>
</reference>
<reference key="2">
    <citation type="journal article" date="1998" name="Science">
        <title>Genome sequence of the nematode C. elegans: a platform for investigating biology.</title>
        <authorList>
            <consortium name="The C. elegans sequencing consortium"/>
        </authorList>
    </citation>
    <scope>NUCLEOTIDE SEQUENCE [LARGE SCALE GENOMIC DNA]</scope>
    <source>
        <strain>Bristol N2</strain>
    </source>
</reference>
<reference key="3">
    <citation type="journal article" date="2003" name="BioFactors">
        <title>Caenorhabditis elegans ubiquinone biosynthesis genes.</title>
        <authorList>
            <person name="Rodriguez-Aguilera J.C."/>
            <person name="Asencio C."/>
            <person name="Ruiz-Ferrer M."/>
            <person name="Vela J."/>
            <person name="Navas P."/>
        </authorList>
    </citation>
    <scope>FUNCTION</scope>
</reference>
<feature type="transit peptide" description="Mitochondrion" evidence="1">
    <location>
        <begin position="1"/>
        <end position="30"/>
    </location>
</feature>
<feature type="chain" id="PRO_0000193362" description="2-methoxy-6-polyprenyl-1,4-benzoquinol methylase, mitochondrial">
    <location>
        <begin position="31"/>
        <end position="285"/>
    </location>
</feature>
<feature type="binding site" evidence="1">
    <location>
        <position position="106"/>
    </location>
    <ligand>
        <name>S-adenosyl-L-methionine</name>
        <dbReference type="ChEBI" id="CHEBI:59789"/>
    </ligand>
</feature>
<feature type="binding site" evidence="1">
    <location>
        <position position="126"/>
    </location>
    <ligand>
        <name>S-adenosyl-L-methionine</name>
        <dbReference type="ChEBI" id="CHEBI:59789"/>
    </ligand>
</feature>
<feature type="binding site" evidence="1">
    <location>
        <begin position="156"/>
        <end position="157"/>
    </location>
    <ligand>
        <name>S-adenosyl-L-methionine</name>
        <dbReference type="ChEBI" id="CHEBI:59789"/>
    </ligand>
</feature>
<feature type="binding site" evidence="1">
    <location>
        <position position="173"/>
    </location>
    <ligand>
        <name>S-adenosyl-L-methionine</name>
        <dbReference type="ChEBI" id="CHEBI:59789"/>
    </ligand>
</feature>
<dbReference type="EC" id="2.1.1.201" evidence="1"/>
<dbReference type="EMBL" id="FO080278">
    <property type="protein sequence ID" value="CCD62554.1"/>
    <property type="molecule type" value="Genomic_DNA"/>
</dbReference>
<dbReference type="PIR" id="S44904">
    <property type="entry name" value="S44904"/>
</dbReference>
<dbReference type="RefSeq" id="NP_498704.1">
    <property type="nucleotide sequence ID" value="NM_066303.9"/>
</dbReference>
<dbReference type="SMR" id="P34666"/>
<dbReference type="BioGRID" id="41307">
    <property type="interactions" value="5"/>
</dbReference>
<dbReference type="FunCoup" id="P34666">
    <property type="interactions" value="2447"/>
</dbReference>
<dbReference type="IntAct" id="P34666">
    <property type="interactions" value="1"/>
</dbReference>
<dbReference type="MINT" id="P34666"/>
<dbReference type="STRING" id="6239.ZK652.9.1"/>
<dbReference type="PaxDb" id="6239-ZK652.9"/>
<dbReference type="PeptideAtlas" id="P34666"/>
<dbReference type="EnsemblMetazoa" id="ZK652.9.1">
    <property type="protein sequence ID" value="ZK652.9.1"/>
    <property type="gene ID" value="WBGene00000765"/>
</dbReference>
<dbReference type="GeneID" id="176099"/>
<dbReference type="KEGG" id="cel:CELE_ZK652.9"/>
<dbReference type="UCSC" id="ZK652.9">
    <property type="organism name" value="c. elegans"/>
</dbReference>
<dbReference type="AGR" id="WB:WBGene00000765"/>
<dbReference type="CTD" id="176099"/>
<dbReference type="WormBase" id="ZK652.9">
    <property type="protein sequence ID" value="CE29014"/>
    <property type="gene ID" value="WBGene00000765"/>
    <property type="gene designation" value="coq-5"/>
</dbReference>
<dbReference type="eggNOG" id="KOG1540">
    <property type="taxonomic scope" value="Eukaryota"/>
</dbReference>
<dbReference type="GeneTree" id="ENSGT00390000001654"/>
<dbReference type="HOGENOM" id="CLU_037990_0_1_1"/>
<dbReference type="InParanoid" id="P34666"/>
<dbReference type="OMA" id="MNDVMSM"/>
<dbReference type="OrthoDB" id="6329284at2759"/>
<dbReference type="PhylomeDB" id="P34666"/>
<dbReference type="Reactome" id="R-CEL-2142789">
    <property type="pathway name" value="Ubiquinol biosynthesis"/>
</dbReference>
<dbReference type="SignaLink" id="P34666"/>
<dbReference type="UniPathway" id="UPA00232"/>
<dbReference type="PRO" id="PR:P34666"/>
<dbReference type="Proteomes" id="UP000001940">
    <property type="component" value="Chromosome III"/>
</dbReference>
<dbReference type="Bgee" id="WBGene00000765">
    <property type="expression patterns" value="Expressed in adult organism and 3 other cell types or tissues"/>
</dbReference>
<dbReference type="GO" id="GO:0031314">
    <property type="term" value="C:extrinsic component of mitochondrial inner membrane"/>
    <property type="evidence" value="ECO:0007669"/>
    <property type="project" value="UniProtKB-UniRule"/>
</dbReference>
<dbReference type="GO" id="GO:0008425">
    <property type="term" value="F:2-methoxy-6-polyprenyl-1,4-benzoquinol methyltransferase activity"/>
    <property type="evidence" value="ECO:0000318"/>
    <property type="project" value="GO_Central"/>
</dbReference>
<dbReference type="GO" id="GO:0032259">
    <property type="term" value="P:methylation"/>
    <property type="evidence" value="ECO:0007669"/>
    <property type="project" value="UniProtKB-KW"/>
</dbReference>
<dbReference type="GO" id="GO:0006744">
    <property type="term" value="P:ubiquinone biosynthetic process"/>
    <property type="evidence" value="ECO:0000315"/>
    <property type="project" value="WormBase"/>
</dbReference>
<dbReference type="CDD" id="cd02440">
    <property type="entry name" value="AdoMet_MTases"/>
    <property type="match status" value="1"/>
</dbReference>
<dbReference type="FunFam" id="3.40.50.150:FF:000064">
    <property type="entry name" value="2-methoxy-6-polyprenyl-1,4-benzoquinol methylase, mitochondrial"/>
    <property type="match status" value="1"/>
</dbReference>
<dbReference type="Gene3D" id="3.40.50.150">
    <property type="entry name" value="Vaccinia Virus protein VP39"/>
    <property type="match status" value="1"/>
</dbReference>
<dbReference type="HAMAP" id="MF_01813">
    <property type="entry name" value="MenG_UbiE_methyltr"/>
    <property type="match status" value="1"/>
</dbReference>
<dbReference type="InterPro" id="IPR029063">
    <property type="entry name" value="SAM-dependent_MTases_sf"/>
</dbReference>
<dbReference type="InterPro" id="IPR004033">
    <property type="entry name" value="UbiE/COQ5_MeTrFase"/>
</dbReference>
<dbReference type="InterPro" id="IPR023576">
    <property type="entry name" value="UbiE/COQ5_MeTrFase_CS"/>
</dbReference>
<dbReference type="NCBIfam" id="TIGR01934">
    <property type="entry name" value="MenG_MenH_UbiE"/>
    <property type="match status" value="1"/>
</dbReference>
<dbReference type="NCBIfam" id="NF001244">
    <property type="entry name" value="PRK00216.1-5"/>
    <property type="match status" value="1"/>
</dbReference>
<dbReference type="PANTHER" id="PTHR43591:SF24">
    <property type="entry name" value="2-METHOXY-6-POLYPRENYL-1,4-BENZOQUINOL METHYLASE, MITOCHONDRIAL"/>
    <property type="match status" value="1"/>
</dbReference>
<dbReference type="PANTHER" id="PTHR43591">
    <property type="entry name" value="METHYLTRANSFERASE"/>
    <property type="match status" value="1"/>
</dbReference>
<dbReference type="Pfam" id="PF01209">
    <property type="entry name" value="Ubie_methyltran"/>
    <property type="match status" value="1"/>
</dbReference>
<dbReference type="SUPFAM" id="SSF53335">
    <property type="entry name" value="S-adenosyl-L-methionine-dependent methyltransferases"/>
    <property type="match status" value="1"/>
</dbReference>
<dbReference type="PROSITE" id="PS51608">
    <property type="entry name" value="SAM_MT_UBIE"/>
    <property type="match status" value="1"/>
</dbReference>
<dbReference type="PROSITE" id="PS01183">
    <property type="entry name" value="UBIE_1"/>
    <property type="match status" value="1"/>
</dbReference>
<dbReference type="PROSITE" id="PS01184">
    <property type="entry name" value="UBIE_2"/>
    <property type="match status" value="1"/>
</dbReference>
<name>COQ5_CAEEL</name>